<organism>
    <name type="scientific">Agrobacterium fabrum (strain C58 / ATCC 33970)</name>
    <name type="common">Agrobacterium tumefaciens (strain C58)</name>
    <dbReference type="NCBI Taxonomy" id="176299"/>
    <lineage>
        <taxon>Bacteria</taxon>
        <taxon>Pseudomonadati</taxon>
        <taxon>Pseudomonadota</taxon>
        <taxon>Alphaproteobacteria</taxon>
        <taxon>Hyphomicrobiales</taxon>
        <taxon>Rhizobiaceae</taxon>
        <taxon>Rhizobium/Agrobacterium group</taxon>
        <taxon>Agrobacterium</taxon>
        <taxon>Agrobacterium tumefaciens complex</taxon>
    </lineage>
</organism>
<name>TRPB_AGRFC</name>
<reference key="1">
    <citation type="journal article" date="2001" name="Science">
        <title>The genome of the natural genetic engineer Agrobacterium tumefaciens C58.</title>
        <authorList>
            <person name="Wood D.W."/>
            <person name="Setubal J.C."/>
            <person name="Kaul R."/>
            <person name="Monks D.E."/>
            <person name="Kitajima J.P."/>
            <person name="Okura V.K."/>
            <person name="Zhou Y."/>
            <person name="Chen L."/>
            <person name="Wood G.E."/>
            <person name="Almeida N.F. Jr."/>
            <person name="Woo L."/>
            <person name="Chen Y."/>
            <person name="Paulsen I.T."/>
            <person name="Eisen J.A."/>
            <person name="Karp P.D."/>
            <person name="Bovee D. Sr."/>
            <person name="Chapman P."/>
            <person name="Clendenning J."/>
            <person name="Deatherage G."/>
            <person name="Gillet W."/>
            <person name="Grant C."/>
            <person name="Kutyavin T."/>
            <person name="Levy R."/>
            <person name="Li M.-J."/>
            <person name="McClelland E."/>
            <person name="Palmieri A."/>
            <person name="Raymond C."/>
            <person name="Rouse G."/>
            <person name="Saenphimmachak C."/>
            <person name="Wu Z."/>
            <person name="Romero P."/>
            <person name="Gordon D."/>
            <person name="Zhang S."/>
            <person name="Yoo H."/>
            <person name="Tao Y."/>
            <person name="Biddle P."/>
            <person name="Jung M."/>
            <person name="Krespan W."/>
            <person name="Perry M."/>
            <person name="Gordon-Kamm B."/>
            <person name="Liao L."/>
            <person name="Kim S."/>
            <person name="Hendrick C."/>
            <person name="Zhao Z.-Y."/>
            <person name="Dolan M."/>
            <person name="Chumley F."/>
            <person name="Tingey S.V."/>
            <person name="Tomb J.-F."/>
            <person name="Gordon M.P."/>
            <person name="Olson M.V."/>
            <person name="Nester E.W."/>
        </authorList>
    </citation>
    <scope>NUCLEOTIDE SEQUENCE [LARGE SCALE GENOMIC DNA]</scope>
    <source>
        <strain>C58 / ATCC 33970</strain>
    </source>
</reference>
<reference key="2">
    <citation type="journal article" date="2001" name="Science">
        <title>Genome sequence of the plant pathogen and biotechnology agent Agrobacterium tumefaciens C58.</title>
        <authorList>
            <person name="Goodner B."/>
            <person name="Hinkle G."/>
            <person name="Gattung S."/>
            <person name="Miller N."/>
            <person name="Blanchard M."/>
            <person name="Qurollo B."/>
            <person name="Goldman B.S."/>
            <person name="Cao Y."/>
            <person name="Askenazi M."/>
            <person name="Halling C."/>
            <person name="Mullin L."/>
            <person name="Houmiel K."/>
            <person name="Gordon J."/>
            <person name="Vaudin M."/>
            <person name="Iartchouk O."/>
            <person name="Epp A."/>
            <person name="Liu F."/>
            <person name="Wollam C."/>
            <person name="Allinger M."/>
            <person name="Doughty D."/>
            <person name="Scott C."/>
            <person name="Lappas C."/>
            <person name="Markelz B."/>
            <person name="Flanagan C."/>
            <person name="Crowell C."/>
            <person name="Gurson J."/>
            <person name="Lomo C."/>
            <person name="Sear C."/>
            <person name="Strub G."/>
            <person name="Cielo C."/>
            <person name="Slater S."/>
        </authorList>
    </citation>
    <scope>NUCLEOTIDE SEQUENCE [LARGE SCALE GENOMIC DNA]</scope>
    <source>
        <strain>C58 / ATCC 33970</strain>
    </source>
</reference>
<proteinExistence type="inferred from homology"/>
<comment type="function">
    <text evidence="1">The beta subunit is responsible for the synthesis of L-tryptophan from indole and L-serine.</text>
</comment>
<comment type="catalytic activity">
    <reaction>
        <text>(1S,2R)-1-C-(indol-3-yl)glycerol 3-phosphate + L-serine = D-glyceraldehyde 3-phosphate + L-tryptophan + H2O</text>
        <dbReference type="Rhea" id="RHEA:10532"/>
        <dbReference type="ChEBI" id="CHEBI:15377"/>
        <dbReference type="ChEBI" id="CHEBI:33384"/>
        <dbReference type="ChEBI" id="CHEBI:57912"/>
        <dbReference type="ChEBI" id="CHEBI:58866"/>
        <dbReference type="ChEBI" id="CHEBI:59776"/>
        <dbReference type="EC" id="4.2.1.20"/>
    </reaction>
</comment>
<comment type="cofactor">
    <cofactor evidence="1">
        <name>pyridoxal 5'-phosphate</name>
        <dbReference type="ChEBI" id="CHEBI:597326"/>
    </cofactor>
</comment>
<comment type="pathway">
    <text>Amino-acid biosynthesis; L-tryptophan biosynthesis; L-tryptophan from chorismate: step 5/5.</text>
</comment>
<comment type="subunit">
    <text evidence="1">Tetramer of two alpha and two beta chains.</text>
</comment>
<comment type="similarity">
    <text evidence="2">Belongs to the TrpB family.</text>
</comment>
<protein>
    <recommendedName>
        <fullName>Tryptophan synthase beta chain</fullName>
        <ecNumber>4.2.1.20</ecNumber>
    </recommendedName>
</protein>
<dbReference type="EC" id="4.2.1.20"/>
<dbReference type="EMBL" id="AE007869">
    <property type="protein sequence ID" value="AAK85843.2"/>
    <property type="molecule type" value="Genomic_DNA"/>
</dbReference>
<dbReference type="PIR" id="AC2579">
    <property type="entry name" value="AC2579"/>
</dbReference>
<dbReference type="PIR" id="B97361">
    <property type="entry name" value="B97361"/>
</dbReference>
<dbReference type="RefSeq" id="NP_353058.2">
    <property type="nucleotide sequence ID" value="NC_003062.2"/>
</dbReference>
<dbReference type="RefSeq" id="WP_010970606.1">
    <property type="nucleotide sequence ID" value="NC_003062.2"/>
</dbReference>
<dbReference type="SMR" id="Q8UJB0"/>
<dbReference type="STRING" id="176299.Atu0018"/>
<dbReference type="EnsemblBacteria" id="AAK85843">
    <property type="protein sequence ID" value="AAK85843"/>
    <property type="gene ID" value="Atu0018"/>
</dbReference>
<dbReference type="GeneID" id="1132056"/>
<dbReference type="KEGG" id="atu:Atu0018"/>
<dbReference type="PATRIC" id="fig|176299.10.peg.19"/>
<dbReference type="eggNOG" id="COG0133">
    <property type="taxonomic scope" value="Bacteria"/>
</dbReference>
<dbReference type="HOGENOM" id="CLU_016734_3_1_5"/>
<dbReference type="OrthoDB" id="9766131at2"/>
<dbReference type="PhylomeDB" id="Q8UJB0"/>
<dbReference type="BioCyc" id="AGRO:ATU0018-MONOMER"/>
<dbReference type="UniPathway" id="UPA00035">
    <property type="reaction ID" value="UER00044"/>
</dbReference>
<dbReference type="Proteomes" id="UP000000813">
    <property type="component" value="Chromosome circular"/>
</dbReference>
<dbReference type="GO" id="GO:0005737">
    <property type="term" value="C:cytoplasm"/>
    <property type="evidence" value="ECO:0007669"/>
    <property type="project" value="TreeGrafter"/>
</dbReference>
<dbReference type="GO" id="GO:0004834">
    <property type="term" value="F:tryptophan synthase activity"/>
    <property type="evidence" value="ECO:0007669"/>
    <property type="project" value="UniProtKB-UniRule"/>
</dbReference>
<dbReference type="CDD" id="cd06446">
    <property type="entry name" value="Trp-synth_B"/>
    <property type="match status" value="1"/>
</dbReference>
<dbReference type="FunFam" id="3.40.50.1100:FF:000001">
    <property type="entry name" value="Tryptophan synthase beta chain"/>
    <property type="match status" value="1"/>
</dbReference>
<dbReference type="FunFam" id="3.40.50.1100:FF:000004">
    <property type="entry name" value="Tryptophan synthase beta chain"/>
    <property type="match status" value="1"/>
</dbReference>
<dbReference type="Gene3D" id="3.40.50.1100">
    <property type="match status" value="2"/>
</dbReference>
<dbReference type="HAMAP" id="MF_00133">
    <property type="entry name" value="Trp_synth_beta"/>
    <property type="match status" value="1"/>
</dbReference>
<dbReference type="InterPro" id="IPR006653">
    <property type="entry name" value="Trp_synth_b_CS"/>
</dbReference>
<dbReference type="InterPro" id="IPR006654">
    <property type="entry name" value="Trp_synth_beta"/>
</dbReference>
<dbReference type="InterPro" id="IPR023026">
    <property type="entry name" value="Trp_synth_beta/beta-like"/>
</dbReference>
<dbReference type="InterPro" id="IPR001926">
    <property type="entry name" value="TrpB-like_PALP"/>
</dbReference>
<dbReference type="InterPro" id="IPR036052">
    <property type="entry name" value="TrpB-like_PALP_sf"/>
</dbReference>
<dbReference type="NCBIfam" id="TIGR00263">
    <property type="entry name" value="trpB"/>
    <property type="match status" value="1"/>
</dbReference>
<dbReference type="PANTHER" id="PTHR48077:SF3">
    <property type="entry name" value="TRYPTOPHAN SYNTHASE"/>
    <property type="match status" value="1"/>
</dbReference>
<dbReference type="PANTHER" id="PTHR48077">
    <property type="entry name" value="TRYPTOPHAN SYNTHASE-RELATED"/>
    <property type="match status" value="1"/>
</dbReference>
<dbReference type="Pfam" id="PF00291">
    <property type="entry name" value="PALP"/>
    <property type="match status" value="1"/>
</dbReference>
<dbReference type="PIRSF" id="PIRSF001413">
    <property type="entry name" value="Trp_syn_beta"/>
    <property type="match status" value="1"/>
</dbReference>
<dbReference type="SUPFAM" id="SSF53686">
    <property type="entry name" value="Tryptophan synthase beta subunit-like PLP-dependent enzymes"/>
    <property type="match status" value="1"/>
</dbReference>
<dbReference type="PROSITE" id="PS00168">
    <property type="entry name" value="TRP_SYNTHASE_BETA"/>
    <property type="match status" value="1"/>
</dbReference>
<gene>
    <name type="primary">trpB</name>
    <name type="ordered locus">Atu0018</name>
    <name type="ORF">AGR_C_28</name>
</gene>
<sequence>MNDAPTPNSFRAGPDEDGRFGIYGGRFVAETLMPLILDLQAEWDKAKSDPEFQAELKYLGTHYTGRPSPLYFAERLTAELGGAKIYFKREELNHTGSHKINNCLGQILLAKRMGKTRIIAETGAGQHGVASATVAARFGLPCVVYMGATDVARQAPNVFRMKLLGAEVKPVTAGHGTLKDAMNEALRDWVTNVDDTYYLIGTAAGPHPYPEMVRDFQAVIGEEAKAQMLEAEGRLPDMIIAAVGGGSNAIGIFHPFLDDKNVRIVGVEAGGKGLSGEEHCASITAGSPGVLHGNRTYLLQDGDGQIKEGHSISAGLDYPGIGPEHSWLNDIGRVEYVPIMDHEALDAFQMLTRLEGIIPALEPSHALAEVIKRAPKMGKDEIILMNLSGRGDKDVHTVSKFLGMDV</sequence>
<keyword id="KW-0028">Amino-acid biosynthesis</keyword>
<keyword id="KW-0057">Aromatic amino acid biosynthesis</keyword>
<keyword id="KW-0456">Lyase</keyword>
<keyword id="KW-0663">Pyridoxal phosphate</keyword>
<keyword id="KW-1185">Reference proteome</keyword>
<keyword id="KW-0822">Tryptophan biosynthesis</keyword>
<evidence type="ECO:0000250" key="1"/>
<evidence type="ECO:0000305" key="2"/>
<accession>Q8UJB0</accession>
<feature type="chain" id="PRO_0000098909" description="Tryptophan synthase beta chain">
    <location>
        <begin position="1"/>
        <end position="406"/>
    </location>
</feature>
<feature type="modified residue" description="N6-(pyridoxal phosphate)lysine" evidence="1">
    <location>
        <position position="99"/>
    </location>
</feature>